<protein>
    <recommendedName>
        <fullName evidence="1">Large ribosomal subunit protein uL15</fullName>
    </recommendedName>
    <alternativeName>
        <fullName evidence="3">50S ribosomal protein L15</fullName>
    </alternativeName>
</protein>
<gene>
    <name evidence="1" type="primary">rplO</name>
    <name type="synonym">rpl15</name>
    <name type="ordered locus">MYCGA0690</name>
    <name type="ORF">MGA_0739</name>
</gene>
<organism>
    <name type="scientific">Mycoplasmoides gallisepticum (strain R(low / passage 15 / clone 2))</name>
    <name type="common">Mycoplasma gallisepticum</name>
    <dbReference type="NCBI Taxonomy" id="710127"/>
    <lineage>
        <taxon>Bacteria</taxon>
        <taxon>Bacillati</taxon>
        <taxon>Mycoplasmatota</taxon>
        <taxon>Mycoplasmoidales</taxon>
        <taxon>Mycoplasmoidaceae</taxon>
        <taxon>Mycoplasmoides</taxon>
    </lineage>
</organism>
<comment type="function">
    <text evidence="1">Binds to the 23S rRNA.</text>
</comment>
<comment type="subunit">
    <text evidence="1">Part of the 50S ribosomal subunit.</text>
</comment>
<comment type="similarity">
    <text evidence="1">Belongs to the universal ribosomal protein uL15 family.</text>
</comment>
<evidence type="ECO:0000255" key="1">
    <source>
        <dbReference type="HAMAP-Rule" id="MF_01341"/>
    </source>
</evidence>
<evidence type="ECO:0000256" key="2">
    <source>
        <dbReference type="SAM" id="MobiDB-lite"/>
    </source>
</evidence>
<evidence type="ECO:0000305" key="3"/>
<proteinExistence type="inferred from homology"/>
<accession>O52350</accession>
<name>RL15_MYCGA</name>
<feature type="chain" id="PRO_0000104757" description="Large ribosomal subunit protein uL15">
    <location>
        <begin position="1"/>
        <end position="147"/>
    </location>
</feature>
<feature type="region of interest" description="Disordered" evidence="2">
    <location>
        <begin position="1"/>
        <end position="57"/>
    </location>
</feature>
<feature type="compositionally biased region" description="Basic residues" evidence="2">
    <location>
        <begin position="10"/>
        <end position="21"/>
    </location>
</feature>
<feature type="compositionally biased region" description="Gly residues" evidence="2">
    <location>
        <begin position="22"/>
        <end position="36"/>
    </location>
</feature>
<feature type="compositionally biased region" description="Basic residues" evidence="2">
    <location>
        <begin position="37"/>
        <end position="46"/>
    </location>
</feature>
<feature type="sequence conflict" description="In Ref. 1; AAB95405." evidence="3" ref="1">
    <original>A</original>
    <variation>T</variation>
    <location>
        <position position="9"/>
    </location>
</feature>
<sequence>MKLHELKSAPKSRNHKAKVVGRGHGSGLGKTSGRGQKGQKARKSGRTRPGFEGGQTPLYRRLPKFGFQTVGFKKQTLSVSLDIIAKLNETTIDRELLVKHGIISSKTNEPIKVIGNKIDKKIHLKINKISEGAKKAIQSAGGSIELI</sequence>
<reference key="1">
    <citation type="journal article" date="2000" name="Mol. Biol. (Mosk.)">
        <title>Determination and analysis of the nucleotide sequence of a segment of a Mycoplasma gallisepticum strain A5969 chromosome, containing operons S10 and rrn23-5.</title>
        <authorList>
            <person name="Skamrov A.V."/>
            <person name="Gol'dman M.A."/>
            <person name="Feoktistova E.S."/>
            <person name="Bibilashvili R.S."/>
        </authorList>
    </citation>
    <scope>NUCLEOTIDE SEQUENCE [GENOMIC DNA]</scope>
    <source>
        <strain>A5969Var.B</strain>
    </source>
</reference>
<reference key="2">
    <citation type="journal article" date="2003" name="Microbiology">
        <title>The complete genome sequence of the avian pathogen Mycoplasma gallisepticum strain R(low).</title>
        <authorList>
            <person name="Papazisi L."/>
            <person name="Gorton T.S."/>
            <person name="Kutish G."/>
            <person name="Markham P.F."/>
            <person name="Browning G.F."/>
            <person name="Nguyen D.K."/>
            <person name="Swartzell S."/>
            <person name="Madan A."/>
            <person name="Mahairas G."/>
            <person name="Geary S.J."/>
        </authorList>
    </citation>
    <scope>NUCLEOTIDE SEQUENCE [LARGE SCALE GENOMIC DNA]</scope>
    <source>
        <strain>R(low / passage 15 / clone 2)</strain>
    </source>
</reference>
<keyword id="KW-1185">Reference proteome</keyword>
<keyword id="KW-0687">Ribonucleoprotein</keyword>
<keyword id="KW-0689">Ribosomal protein</keyword>
<keyword id="KW-0694">RNA-binding</keyword>
<keyword id="KW-0699">rRNA-binding</keyword>
<dbReference type="EMBL" id="AF036708">
    <property type="protein sequence ID" value="AAB95405.1"/>
    <property type="molecule type" value="Genomic_DNA"/>
</dbReference>
<dbReference type="EMBL" id="AE015450">
    <property type="protein sequence ID" value="AAP56419.2"/>
    <property type="molecule type" value="Genomic_DNA"/>
</dbReference>
<dbReference type="RefSeq" id="WP_011113298.1">
    <property type="nucleotide sequence ID" value="NC_004829.2"/>
</dbReference>
<dbReference type="SMR" id="O52350"/>
<dbReference type="GeneID" id="93509887"/>
<dbReference type="KEGG" id="mga:MGA_0739"/>
<dbReference type="HOGENOM" id="CLU_055188_4_2_14"/>
<dbReference type="OrthoDB" id="9810293at2"/>
<dbReference type="Proteomes" id="UP000001418">
    <property type="component" value="Chromosome"/>
</dbReference>
<dbReference type="GO" id="GO:0022625">
    <property type="term" value="C:cytosolic large ribosomal subunit"/>
    <property type="evidence" value="ECO:0007669"/>
    <property type="project" value="TreeGrafter"/>
</dbReference>
<dbReference type="GO" id="GO:0019843">
    <property type="term" value="F:rRNA binding"/>
    <property type="evidence" value="ECO:0007669"/>
    <property type="project" value="UniProtKB-UniRule"/>
</dbReference>
<dbReference type="GO" id="GO:0003735">
    <property type="term" value="F:structural constituent of ribosome"/>
    <property type="evidence" value="ECO:0007669"/>
    <property type="project" value="InterPro"/>
</dbReference>
<dbReference type="GO" id="GO:0006412">
    <property type="term" value="P:translation"/>
    <property type="evidence" value="ECO:0007669"/>
    <property type="project" value="UniProtKB-UniRule"/>
</dbReference>
<dbReference type="Gene3D" id="3.100.10.10">
    <property type="match status" value="1"/>
</dbReference>
<dbReference type="HAMAP" id="MF_01341">
    <property type="entry name" value="Ribosomal_uL15"/>
    <property type="match status" value="1"/>
</dbReference>
<dbReference type="InterPro" id="IPR030878">
    <property type="entry name" value="Ribosomal_uL15"/>
</dbReference>
<dbReference type="InterPro" id="IPR021131">
    <property type="entry name" value="Ribosomal_uL15/eL18"/>
</dbReference>
<dbReference type="InterPro" id="IPR036227">
    <property type="entry name" value="Ribosomal_uL15/eL18_sf"/>
</dbReference>
<dbReference type="InterPro" id="IPR005749">
    <property type="entry name" value="Ribosomal_uL15_bac-type"/>
</dbReference>
<dbReference type="NCBIfam" id="TIGR01071">
    <property type="entry name" value="rplO_bact"/>
    <property type="match status" value="1"/>
</dbReference>
<dbReference type="PANTHER" id="PTHR12934">
    <property type="entry name" value="50S RIBOSOMAL PROTEIN L15"/>
    <property type="match status" value="1"/>
</dbReference>
<dbReference type="PANTHER" id="PTHR12934:SF11">
    <property type="entry name" value="LARGE RIBOSOMAL SUBUNIT PROTEIN UL15M"/>
    <property type="match status" value="1"/>
</dbReference>
<dbReference type="Pfam" id="PF00828">
    <property type="entry name" value="Ribosomal_L27A"/>
    <property type="match status" value="1"/>
</dbReference>
<dbReference type="SUPFAM" id="SSF52080">
    <property type="entry name" value="Ribosomal proteins L15p and L18e"/>
    <property type="match status" value="1"/>
</dbReference>